<keyword id="KW-0066">ATP synthesis</keyword>
<keyword id="KW-0375">Hydrogen ion transport</keyword>
<keyword id="KW-0406">Ion transport</keyword>
<keyword id="KW-0813">Transport</keyword>
<comment type="function">
    <text evidence="1">Produces ATP from ADP in the presence of a proton gradient across the membrane.</text>
</comment>
<comment type="similarity">
    <text evidence="2">Belongs to the V-ATPase D subunit family.</text>
</comment>
<gene>
    <name type="primary">atpD</name>
    <name type="ordered locus">TC_0580</name>
</gene>
<proteinExistence type="inferred from homology"/>
<organism>
    <name type="scientific">Chlamydia muridarum (strain MoPn / Nigg)</name>
    <dbReference type="NCBI Taxonomy" id="243161"/>
    <lineage>
        <taxon>Bacteria</taxon>
        <taxon>Pseudomonadati</taxon>
        <taxon>Chlamydiota</taxon>
        <taxon>Chlamydiia</taxon>
        <taxon>Chlamydiales</taxon>
        <taxon>Chlamydiaceae</taxon>
        <taxon>Chlamydia/Chlamydophila group</taxon>
        <taxon>Chlamydia</taxon>
    </lineage>
</organism>
<dbReference type="EMBL" id="AE002160">
    <property type="protein sequence ID" value="AAF73574.1"/>
    <property type="molecule type" value="Genomic_DNA"/>
</dbReference>
<dbReference type="RefSeq" id="WP_010230895.1">
    <property type="nucleotide sequence ID" value="NZ_CP063055.1"/>
</dbReference>
<dbReference type="SMR" id="Q9PK87"/>
<dbReference type="GeneID" id="1245939"/>
<dbReference type="KEGG" id="cmu:TC_0580"/>
<dbReference type="eggNOG" id="COG1394">
    <property type="taxonomic scope" value="Bacteria"/>
</dbReference>
<dbReference type="HOGENOM" id="CLU_113661_0_0_0"/>
<dbReference type="OrthoDB" id="5637912at2"/>
<dbReference type="Proteomes" id="UP000000800">
    <property type="component" value="Chromosome"/>
</dbReference>
<dbReference type="GO" id="GO:0005524">
    <property type="term" value="F:ATP binding"/>
    <property type="evidence" value="ECO:0007669"/>
    <property type="project" value="UniProtKB-UniRule"/>
</dbReference>
<dbReference type="GO" id="GO:0046933">
    <property type="term" value="F:proton-transporting ATP synthase activity, rotational mechanism"/>
    <property type="evidence" value="ECO:0007669"/>
    <property type="project" value="UniProtKB-UniRule"/>
</dbReference>
<dbReference type="GO" id="GO:0046961">
    <property type="term" value="F:proton-transporting ATPase activity, rotational mechanism"/>
    <property type="evidence" value="ECO:0007669"/>
    <property type="project" value="InterPro"/>
</dbReference>
<dbReference type="GO" id="GO:0042777">
    <property type="term" value="P:proton motive force-driven plasma membrane ATP synthesis"/>
    <property type="evidence" value="ECO:0007669"/>
    <property type="project" value="UniProtKB-UniRule"/>
</dbReference>
<dbReference type="Gene3D" id="1.10.287.3240">
    <property type="match status" value="1"/>
</dbReference>
<dbReference type="HAMAP" id="MF_00271">
    <property type="entry name" value="ATP_synth_D_arch"/>
    <property type="match status" value="1"/>
</dbReference>
<dbReference type="InterPro" id="IPR002699">
    <property type="entry name" value="V_ATPase_D"/>
</dbReference>
<dbReference type="NCBIfam" id="NF002565">
    <property type="entry name" value="PRK02195.1"/>
    <property type="match status" value="1"/>
</dbReference>
<dbReference type="NCBIfam" id="TIGR00309">
    <property type="entry name" value="V_ATPase_subD"/>
    <property type="match status" value="1"/>
</dbReference>
<dbReference type="PANTHER" id="PTHR11671">
    <property type="entry name" value="V-TYPE ATP SYNTHASE SUBUNIT D"/>
    <property type="match status" value="1"/>
</dbReference>
<dbReference type="Pfam" id="PF01813">
    <property type="entry name" value="ATP-synt_D"/>
    <property type="match status" value="1"/>
</dbReference>
<feature type="chain" id="PRO_0000144264" description="V-type ATP synthase subunit D">
    <location>
        <begin position="1"/>
        <end position="203"/>
    </location>
</feature>
<accession>Q9PK87</accession>
<name>VATD_CHLMU</name>
<protein>
    <recommendedName>
        <fullName>V-type ATP synthase subunit D</fullName>
    </recommendedName>
    <alternativeName>
        <fullName>V-ATPase subunit D</fullName>
    </alternativeName>
</protein>
<reference key="1">
    <citation type="journal article" date="2000" name="Nucleic Acids Res.">
        <title>Genome sequences of Chlamydia trachomatis MoPn and Chlamydia pneumoniae AR39.</title>
        <authorList>
            <person name="Read T.D."/>
            <person name="Brunham R.C."/>
            <person name="Shen C."/>
            <person name="Gill S.R."/>
            <person name="Heidelberg J.F."/>
            <person name="White O."/>
            <person name="Hickey E.K."/>
            <person name="Peterson J.D."/>
            <person name="Utterback T.R."/>
            <person name="Berry K.J."/>
            <person name="Bass S."/>
            <person name="Linher K.D."/>
            <person name="Weidman J.F."/>
            <person name="Khouri H.M."/>
            <person name="Craven B."/>
            <person name="Bowman C."/>
            <person name="Dodson R.J."/>
            <person name="Gwinn M.L."/>
            <person name="Nelson W.C."/>
            <person name="DeBoy R.T."/>
            <person name="Kolonay J.F."/>
            <person name="McClarty G."/>
            <person name="Salzberg S.L."/>
            <person name="Eisen J.A."/>
            <person name="Fraser C.M."/>
        </authorList>
    </citation>
    <scope>NUCLEOTIDE SEQUENCE [LARGE SCALE GENOMIC DNA]</scope>
    <source>
        <strain>MoPn / Nigg</strain>
    </source>
</reference>
<sequence length="203" mass="23223">MSSQIKLTKNSYRAEKQKLNLLGMYLPTLKLKKALLQAEVQSAMRSAAESMAANEQARDRMHAFAELFSIPLYTDAVEQCFSIDIFEKDVENIAGVEVPLLKRVVLTSLEYSLLDTPIWIDSLIASAKEYVLSKIYAENAQERLRLLEEELRRVSIRVNLFEKKLIPTTSQTIKKIAIFLSDRSITDVGQMKMAKKKIQQHKE</sequence>
<evidence type="ECO:0000250" key="1"/>
<evidence type="ECO:0000305" key="2"/>